<evidence type="ECO:0000269" key="1">
    <source>
    </source>
</evidence>
<evidence type="ECO:0000269" key="2">
    <source>
    </source>
</evidence>
<evidence type="ECO:0000269" key="3">
    <source>
    </source>
</evidence>
<evidence type="ECO:0000305" key="4"/>
<organismHost>
    <name type="scientific">Bos taurus</name>
    <name type="common">Bovine</name>
    <dbReference type="NCBI Taxonomy" id="9913"/>
</organismHost>
<organism>
    <name type="scientific">Vaccinia virus (strain Western Reserve)</name>
    <name type="common">VACV</name>
    <name type="synonym">Vaccinia virus (strain WR)</name>
    <dbReference type="NCBI Taxonomy" id="10254"/>
    <lineage>
        <taxon>Viruses</taxon>
        <taxon>Varidnaviria</taxon>
        <taxon>Bamfordvirae</taxon>
        <taxon>Nucleocytoviricota</taxon>
        <taxon>Pokkesviricetes</taxon>
        <taxon>Chitovirales</taxon>
        <taxon>Poxviridae</taxon>
        <taxon>Chordopoxvirinae</taxon>
        <taxon>Orthopoxvirus</taxon>
        <taxon>Vaccinia virus</taxon>
    </lineage>
</organism>
<sequence length="312" mass="35841">MAEFEDQLVFNSISARALKAYFTAKINEMVDELVTRKCPQKKKSQAKKPEVRIPVDLVKSSFVKKFGLCNYGGILISLINSLVENNFFTKDGKLDDTGKKELVLTDVEKRILNTIDKSSPLYIDISDVKVLAARLKRSATQFNFNGHTYHLENDKIEDLINQLVKDESIQLDEKSSIKDSMYVIPDELIDVLKTRLFRSPQVKDNIISRTRLYDYFTRVTKRDESSIYVILKDPRIASILSLETVKMGAFMYTKHSMLTNAISSRVDRYSKKFQESFYEDIAEFVKENERVNVSRVVECLTVPNITISSNAE</sequence>
<dbReference type="EMBL" id="AY243312">
    <property type="protein sequence ID" value="AAO89349.1"/>
    <property type="molecule type" value="Genomic_DNA"/>
</dbReference>
<dbReference type="EMBL" id="J03399">
    <property type="protein sequence ID" value="AAB59803.1"/>
    <property type="molecule type" value="Genomic_DNA"/>
</dbReference>
<dbReference type="EMBL" id="M76472">
    <property type="protein sequence ID" value="AAA48250.1"/>
    <property type="molecule type" value="Genomic_DNA"/>
</dbReference>
<dbReference type="RefSeq" id="YP_232952.1">
    <property type="nucleotide sequence ID" value="NC_006998.1"/>
</dbReference>
<dbReference type="SMR" id="P16714"/>
<dbReference type="IntAct" id="P16714">
    <property type="interactions" value="1"/>
</dbReference>
<dbReference type="MINT" id="P16714"/>
<dbReference type="DNASU" id="3707603"/>
<dbReference type="GeneID" id="3707603"/>
<dbReference type="KEGG" id="vg:3707603"/>
<dbReference type="Proteomes" id="UP000000344">
    <property type="component" value="Genome"/>
</dbReference>
<dbReference type="GO" id="GO:0044423">
    <property type="term" value="C:virion component"/>
    <property type="evidence" value="ECO:0007669"/>
    <property type="project" value="UniProtKB-KW"/>
</dbReference>
<dbReference type="GO" id="GO:0003677">
    <property type="term" value="F:DNA binding"/>
    <property type="evidence" value="ECO:0007669"/>
    <property type="project" value="UniProtKB-KW"/>
</dbReference>
<dbReference type="InterPro" id="IPR004969">
    <property type="entry name" value="Poxvirus_I1"/>
</dbReference>
<dbReference type="Pfam" id="PF03289">
    <property type="entry name" value="Pox_I1"/>
    <property type="match status" value="1"/>
</dbReference>
<dbReference type="PIRSF" id="PIRSF015625">
    <property type="entry name" value="VAC_I1L"/>
    <property type="match status" value="1"/>
</dbReference>
<gene>
    <name type="primary">OPG077</name>
    <name type="ordered locus">VACWR070</name>
    <name type="ORF">I1L</name>
</gene>
<name>PG077_VACCW</name>
<feature type="chain" id="PRO_0000099561" description="Telomere-binding protein OPG077">
    <location>
        <begin position="1"/>
        <end position="312"/>
    </location>
</feature>
<feature type="sequence conflict" description="In Ref. 3; AAA48250." evidence="4" ref="3">
    <original>V</original>
    <variation>A</variation>
    <location>
        <position position="103"/>
    </location>
</feature>
<keyword id="KW-0903">Direct protein sequencing</keyword>
<keyword id="KW-0238">DNA-binding</keyword>
<keyword id="KW-1185">Reference proteome</keyword>
<keyword id="KW-0946">Virion</keyword>
<proteinExistence type="evidence at protein level"/>
<comment type="function">
    <text evidence="1 3">DNA-binding protein which binds to the hairpin form of the viral telomeric sequence. Required for the production of mature virions (MV).</text>
</comment>
<comment type="subcellular location">
    <subcellularLocation>
        <location>Virion</location>
    </subcellularLocation>
    <text>Present in the virus core.</text>
</comment>
<comment type="induction">
    <text evidence="2 3">Expressed in the intermediate phase of the viral replicative cycle.</text>
</comment>
<comment type="miscellaneous">
    <text>Each virion contains approximately 670 molecules of OPG077/I1.</text>
</comment>
<comment type="similarity">
    <text evidence="4">Belongs to the orthopoxvirus OPG077 family.</text>
</comment>
<accession>P16714</accession>
<accession>Q76ZV2</accession>
<accession>Q85324</accession>
<protein>
    <recommendedName>
        <fullName>Telomere-binding protein OPG077</fullName>
    </recommendedName>
    <alternativeName>
        <fullName>Telomere-binding protein I1</fullName>
    </alternativeName>
</protein>
<reference key="1">
    <citation type="submission" date="2003-02" db="EMBL/GenBank/DDBJ databases">
        <title>Sequencing of the coding region of Vaccinia-WR to an average 9-fold redundancy and an error rate of 0.16/10kb.</title>
        <authorList>
            <person name="Esposito J.J."/>
            <person name="Frace A.M."/>
            <person name="Sammons S.A."/>
            <person name="Olsen-Rasmussen M."/>
            <person name="Osborne J."/>
            <person name="Wohlhueter R."/>
        </authorList>
    </citation>
    <scope>NUCLEOTIDE SEQUENCE [LARGE SCALE GENOMIC DNA]</scope>
</reference>
<reference key="2">
    <citation type="journal article" date="1988" name="J. Virol.">
        <title>Sequence and transcriptional analysis of the vaccinia virus HindIII I fragment.</title>
        <authorList>
            <person name="Schmitt J.F.C."/>
            <person name="Stunnenberg H.G."/>
        </authorList>
    </citation>
    <scope>NUCLEOTIDE SEQUENCE [GENOMIC DNA] OF 1-20</scope>
</reference>
<reference key="3">
    <citation type="journal article" date="1992" name="Proc. Natl. Acad. Sci. U.S.A.">
        <title>Glutaredoxin homolog encoded by vaccinia virus is a virion-associated enzyme with thioltransferase and dehydroascorbate reductase activities.</title>
        <authorList>
            <person name="Ahn B.-Y."/>
            <person name="Moss B."/>
        </authorList>
    </citation>
    <scope>NUCLEOTIDE SEQUENCE [GENOMIC DNA] OF 20-312</scope>
</reference>
<reference key="4">
    <citation type="journal article" date="1997" name="J. Virol.">
        <title>The vaccinia virus I1 protein is essential for the assembly of mature virions.</title>
        <authorList>
            <person name="Klemperer N."/>
            <person name="Ward J."/>
            <person name="Evans E."/>
            <person name="Traktman P."/>
        </authorList>
    </citation>
    <scope>PROTEIN SEQUENCE OF 3-11</scope>
    <scope>IDENTIFICATION</scope>
    <scope>INDUCTION</scope>
    <scope>DNA-BINDING</scope>
    <scope>FUNCTION</scope>
</reference>
<reference key="5">
    <citation type="journal article" date="2001" name="J. Virol.">
        <title>Vaccinia virus telomeres: interaction with the viral I1, I6, and K4 proteins.</title>
        <authorList>
            <person name="DeMasi J."/>
            <person name="Du S."/>
            <person name="Lennon D."/>
            <person name="Traktman P."/>
        </authorList>
    </citation>
    <scope>PROTEIN SEQUENCE OF 2-16 AND 236-246</scope>
    <scope>FUNCTION</scope>
</reference>
<reference key="6">
    <citation type="journal article" date="2015" name="J. Virol.">
        <title>Deciphering poxvirus gene expression by RNA sequencing and ribosome profiling.</title>
        <authorList>
            <person name="Yang Z."/>
            <person name="Cao S."/>
            <person name="Martens C.A."/>
            <person name="Porcella S.F."/>
            <person name="Xie Z."/>
            <person name="Ma M."/>
            <person name="Shen B."/>
            <person name="Moss B."/>
        </authorList>
    </citation>
    <scope>INDUCTION</scope>
</reference>